<sequence>MKAIVVLLILALILCLYAMTTVEGACQFWSCNSSCISRGYRQGYCWGIQYKYCQCQ</sequence>
<comment type="function">
    <text evidence="2">Antibacterial protein involved in the immune response to septic injury. When combined with 14.026 kDa and 14.059 kDa hemolymph antimicrobial peptides, it has a strong cooperative activity against the Gram-positive bacteria B.subtilis and S.aureus, and against the Gram-negative bacteria E.coli DH5-alpha and K.pneumoniae ATCC 138833. Does not show detectable antibacterial activity when present alone. Has no hemolytic activity in human erythrocytes.</text>
</comment>
<comment type="subcellular location">
    <subcellularLocation>
        <location evidence="2">Secreted</location>
    </subcellularLocation>
</comment>
<comment type="induction">
    <text evidence="2">By septic injury.</text>
</comment>
<comment type="mass spectrometry"/>
<comment type="similarity">
    <text evidence="1">Belongs to the invertebrate defensin family.</text>
</comment>
<reference key="1">
    <citation type="journal article" date="2004" name="Cell. Mol. Life Sci.">
        <title>Antimicrobial peptide induction in the haemolymph of the Mexican scorpion Centruroides limpidus limpidus in response to septic injury.</title>
        <authorList>
            <person name="Rodriguez De La Vega R.C."/>
            <person name="Garcia B.I."/>
            <person name="D'Ambrosio C."/>
            <person name="Diego-Garcia E."/>
            <person name="Scaloni A."/>
            <person name="Possani L.D."/>
        </authorList>
    </citation>
    <scope>NUCLEOTIDE SEQUENCE</scope>
    <scope>PROTEIN SEQUENCE OF 25-56</scope>
    <scope>FUNCTION</scope>
    <scope>TISSUE SPECIFICITY</scope>
    <scope>SUBCELLULAR LOCATION</scope>
    <scope>MASS SPECTROMETRY</scope>
    <source>
        <tissue>Hemolymph</tissue>
    </source>
</reference>
<accession>Q6GU94</accession>
<accession>P83738</accession>
<evidence type="ECO:0000255" key="1">
    <source>
        <dbReference type="PROSITE-ProRule" id="PRU00710"/>
    </source>
</evidence>
<evidence type="ECO:0000269" key="2">
    <source>
    </source>
</evidence>
<evidence type="ECO:0007829" key="3">
    <source>
        <dbReference type="PDB" id="6B9W"/>
    </source>
</evidence>
<evidence type="ECO:0007829" key="4">
    <source>
        <dbReference type="PDB" id="6BAM"/>
    </source>
</evidence>
<feature type="signal peptide" evidence="2">
    <location>
        <begin position="1"/>
        <end position="24"/>
    </location>
</feature>
<feature type="chain" id="PRO_0000006764" description="Defensin-1" evidence="2">
    <location>
        <begin position="25"/>
        <end position="56"/>
    </location>
</feature>
<feature type="disulfide bond" evidence="1 2">
    <location>
        <begin position="26"/>
        <end position="45"/>
    </location>
</feature>
<feature type="disulfide bond" evidence="1 2">
    <location>
        <begin position="31"/>
        <end position="53"/>
    </location>
</feature>
<feature type="disulfide bond" evidence="1 2">
    <location>
        <begin position="35"/>
        <end position="55"/>
    </location>
</feature>
<feature type="helix" evidence="3">
    <location>
        <begin position="28"/>
        <end position="36"/>
    </location>
</feature>
<feature type="turn" evidence="3">
    <location>
        <begin position="37"/>
        <end position="39"/>
    </location>
</feature>
<feature type="strand" evidence="4">
    <location>
        <begin position="41"/>
        <end position="44"/>
    </location>
</feature>
<feature type="strand" evidence="4">
    <location>
        <begin position="54"/>
        <end position="56"/>
    </location>
</feature>
<protein>
    <recommendedName>
        <fullName>Defensin-1</fullName>
    </recommendedName>
    <alternativeName>
        <fullName>Cll-dlp</fullName>
    </alternativeName>
</protein>
<name>DEFL1_CENLI</name>
<organism>
    <name type="scientific">Centruroides limpidus</name>
    <name type="common">Mexican scorpion</name>
    <dbReference type="NCBI Taxonomy" id="6876"/>
    <lineage>
        <taxon>Eukaryota</taxon>
        <taxon>Metazoa</taxon>
        <taxon>Ecdysozoa</taxon>
        <taxon>Arthropoda</taxon>
        <taxon>Chelicerata</taxon>
        <taxon>Arachnida</taxon>
        <taxon>Scorpiones</taxon>
        <taxon>Buthida</taxon>
        <taxon>Buthoidea</taxon>
        <taxon>Buthidae</taxon>
        <taxon>Centruroides</taxon>
    </lineage>
</organism>
<dbReference type="EMBL" id="AY656081">
    <property type="protein sequence ID" value="AAT57643.1"/>
    <property type="molecule type" value="Genomic_DNA"/>
</dbReference>
<dbReference type="EMBL" id="AY520534">
    <property type="protein sequence ID" value="AAS90630.1"/>
    <property type="molecule type" value="mRNA"/>
</dbReference>
<dbReference type="PDB" id="6B9W">
    <property type="method" value="NMR"/>
    <property type="chains" value="A=25-56"/>
</dbReference>
<dbReference type="PDB" id="6BAM">
    <property type="method" value="NMR"/>
    <property type="chains" value="A=25-56"/>
</dbReference>
<dbReference type="PDB" id="6BB6">
    <property type="method" value="NMR"/>
    <property type="chains" value="A=25-56"/>
</dbReference>
<dbReference type="PDB" id="6BI5">
    <property type="method" value="NMR"/>
    <property type="chains" value="A=25-56"/>
</dbReference>
<dbReference type="PDBsum" id="6B9W"/>
<dbReference type="PDBsum" id="6BAM"/>
<dbReference type="PDBsum" id="6BB6"/>
<dbReference type="PDBsum" id="6BI5"/>
<dbReference type="SMR" id="Q6GU94"/>
<dbReference type="GO" id="GO:0005576">
    <property type="term" value="C:extracellular region"/>
    <property type="evidence" value="ECO:0007669"/>
    <property type="project" value="UniProtKB-SubCell"/>
</dbReference>
<dbReference type="GO" id="GO:0042742">
    <property type="term" value="P:defense response to bacterium"/>
    <property type="evidence" value="ECO:0007669"/>
    <property type="project" value="UniProtKB-KW"/>
</dbReference>
<dbReference type="GO" id="GO:0045087">
    <property type="term" value="P:innate immune response"/>
    <property type="evidence" value="ECO:0007669"/>
    <property type="project" value="UniProtKB-KW"/>
</dbReference>
<dbReference type="InterPro" id="IPR001542">
    <property type="entry name" value="Defensin_invertebrate/fungal"/>
</dbReference>
<dbReference type="PROSITE" id="PS51378">
    <property type="entry name" value="INVERT_DEFENSINS"/>
    <property type="match status" value="1"/>
</dbReference>
<proteinExistence type="evidence at protein level"/>
<keyword id="KW-0002">3D-structure</keyword>
<keyword id="KW-0044">Antibiotic</keyword>
<keyword id="KW-0929">Antimicrobial</keyword>
<keyword id="KW-0211">Defensin</keyword>
<keyword id="KW-0903">Direct protein sequencing</keyword>
<keyword id="KW-1015">Disulfide bond</keyword>
<keyword id="KW-0391">Immunity</keyword>
<keyword id="KW-0399">Innate immunity</keyword>
<keyword id="KW-0964">Secreted</keyword>
<keyword id="KW-0732">Signal</keyword>